<proteinExistence type="inferred from homology"/>
<feature type="chain" id="PRO_0000058727" description="Sonic hedgehog protein">
    <location>
        <begin position="1" status="less than"/>
        <end position="121" status="greater than"/>
    </location>
</feature>
<feature type="binding site" evidence="2">
    <location>
        <position position="60"/>
    </location>
    <ligand>
        <name>Ca(2+)</name>
        <dbReference type="ChEBI" id="CHEBI:29108"/>
        <label>1</label>
    </ligand>
</feature>
<feature type="binding site" evidence="2">
    <location>
        <position position="61"/>
    </location>
    <ligand>
        <name>Ca(2+)</name>
        <dbReference type="ChEBI" id="CHEBI:29108"/>
        <label>1</label>
    </ligand>
</feature>
<feature type="binding site" evidence="2">
    <location>
        <position position="61"/>
    </location>
    <ligand>
        <name>Ca(2+)</name>
        <dbReference type="ChEBI" id="CHEBI:29108"/>
        <label>2</label>
    </ligand>
</feature>
<feature type="binding site" evidence="2">
    <location>
        <position position="76"/>
    </location>
    <ligand>
        <name>Ca(2+)</name>
        <dbReference type="ChEBI" id="CHEBI:29108"/>
        <label>1</label>
    </ligand>
</feature>
<feature type="binding site" evidence="2">
    <location>
        <position position="77"/>
    </location>
    <ligand>
        <name>Ca(2+)</name>
        <dbReference type="ChEBI" id="CHEBI:29108"/>
        <label>1</label>
    </ligand>
</feature>
<feature type="binding site" evidence="2">
    <location>
        <position position="77"/>
    </location>
    <ligand>
        <name>Ca(2+)</name>
        <dbReference type="ChEBI" id="CHEBI:29108"/>
        <label>2</label>
    </ligand>
</feature>
<feature type="binding site" evidence="2">
    <location>
        <position position="80"/>
    </location>
    <ligand>
        <name>Ca(2+)</name>
        <dbReference type="ChEBI" id="CHEBI:29108"/>
        <label>2</label>
    </ligand>
</feature>
<feature type="binding site" evidence="2">
    <location>
        <position position="82"/>
    </location>
    <ligand>
        <name>Ca(2+)</name>
        <dbReference type="ChEBI" id="CHEBI:29108"/>
        <label>2</label>
    </ligand>
</feature>
<feature type="binding site" evidence="2">
    <location>
        <position position="91"/>
    </location>
    <ligand>
        <name>Zn(2+)</name>
        <dbReference type="ChEBI" id="CHEBI:29105"/>
    </ligand>
</feature>
<feature type="binding site" evidence="2">
    <location>
        <position position="98"/>
    </location>
    <ligand>
        <name>Zn(2+)</name>
        <dbReference type="ChEBI" id="CHEBI:29105"/>
    </ligand>
</feature>
<feature type="non-consecutive residues" evidence="3">
    <location>
        <begin position="63"/>
        <end position="64"/>
    </location>
</feature>
<feature type="non-terminal residue">
    <location>
        <position position="1"/>
    </location>
</feature>
<feature type="non-terminal residue">
    <location>
        <position position="121"/>
    </location>
</feature>
<name>SHH_DANKE</name>
<protein>
    <recommendedName>
        <fullName>Sonic hedgehog protein</fullName>
        <shortName>SHH</shortName>
    </recommendedName>
</protein>
<evidence type="ECO:0000250" key="1"/>
<evidence type="ECO:0000250" key="2">
    <source>
        <dbReference type="UniProtKB" id="Q15465"/>
    </source>
</evidence>
<evidence type="ECO:0000305" key="3"/>
<accession>P79709</accession>
<accession>P79710</accession>
<gene>
    <name type="primary">shh</name>
</gene>
<organism>
    <name type="scientific">Danio kerri</name>
    <name type="common">Blue danio</name>
    <name type="synonym">Brachydanio kerri</name>
    <dbReference type="NCBI Taxonomy" id="38750"/>
    <lineage>
        <taxon>Eukaryota</taxon>
        <taxon>Metazoa</taxon>
        <taxon>Chordata</taxon>
        <taxon>Craniata</taxon>
        <taxon>Vertebrata</taxon>
        <taxon>Euteleostomi</taxon>
        <taxon>Actinopterygii</taxon>
        <taxon>Neopterygii</taxon>
        <taxon>Teleostei</taxon>
        <taxon>Ostariophysi</taxon>
        <taxon>Cypriniformes</taxon>
        <taxon>Danionidae</taxon>
        <taxon>Danioninae</taxon>
        <taxon>Danio</taxon>
    </lineage>
</organism>
<reference key="1">
    <citation type="journal article" date="1996" name="Proc. Natl. Acad. Sci. U.S.A.">
        <title>Evolutionary analyses of hedgehog and Hoxd-10 genes in fish species closely related to the zebrafish.</title>
        <authorList>
            <person name="Zardoya R."/>
            <person name="Abouheif E."/>
            <person name="Meyer A."/>
        </authorList>
    </citation>
    <scope>NUCLEOTIDE SEQUENCE [GENOMIC DNA]</scope>
    <source>
        <tissue>Muscle</tissue>
    </source>
</reference>
<sequence>YGRRRHPKKLTPLAYKQFIPNVAEKTLGASGRYEGKITRNSERFKELTPNYNPDIIFKDEENTVMNHWPGVKLRVTEGWDEDGHHFEESLHYEGRAVDITTSDRDKSKYGTLSRLAVEAGF</sequence>
<comment type="function">
    <text evidence="1">Intercellular signal essential for a variety of patterning events during development. Signal produced by the notochord that induces somite patterning, dorso-ventral patterning of the brain and early patterning of the developing eyes. Displays floor plate-inducing activity. Binds to the patched (PTC) receptor, which functions in association with smoothened (SMO), to activate the transcription of target genes. In the absence of SHH, PTC represses the constitutive signaling activity of SMO (By similarity).</text>
</comment>
<comment type="subunit">
    <text evidence="1">N-product is active as a multimer.</text>
</comment>
<comment type="subcellular location">
    <subcellularLocation>
        <location evidence="1">Secreted</location>
    </subcellularLocation>
    <subcellularLocation>
        <location evidence="1">Cell membrane</location>
    </subcellularLocation>
    <text evidence="1">Sonic hedgehog protein C-product: Secreted, extracellular space. Sonic hedgehog protein N-product: Cell membrane; Lipid-anchor. The C-terminal peptide diffuses from the cell, while the N-product either remains associated with lipid rafts at the cell surface, or forms freely diffusible active multimers with its hydrophobic lipid-modified N- and C-termini buried inside.</text>
</comment>
<comment type="domain">
    <text evidence="1">The sonic hedgehog protein N-product binds calcium and zinc ions; this stabilizes the protein fold and is essential for protein-protein interactions mediated by this domain.</text>
</comment>
<comment type="PTM">
    <text>The C-terminal domain displays an autoproteolysis activity and a cholesterol transferase activity. Both activities result in the cleavage of the full-length protein and covalent attachment of a cholesterol moiety to the C-terminal of the newly generated N-terminal fragment (N-product). The N-product is the active species in both local and long-range signaling, whereas the C-product has no signaling activity.</text>
</comment>
<comment type="PTM">
    <text evidence="1">Cholesterylation is required for N-product targeting to lipid rafts and multimerization.</text>
</comment>
<comment type="PTM">
    <text evidence="1">N-palmitoylation is required for N-product multimerization and full activity.</text>
</comment>
<comment type="similarity">
    <text evidence="3">Belongs to the hedgehog family.</text>
</comment>
<keyword id="KW-0068">Autocatalytic cleavage</keyword>
<keyword id="KW-0106">Calcium</keyword>
<keyword id="KW-1003">Cell membrane</keyword>
<keyword id="KW-0217">Developmental protein</keyword>
<keyword id="KW-0378">Hydrolase</keyword>
<keyword id="KW-0449">Lipoprotein</keyword>
<keyword id="KW-0472">Membrane</keyword>
<keyword id="KW-0479">Metal-binding</keyword>
<keyword id="KW-0564">Palmitate</keyword>
<keyword id="KW-0645">Protease</keyword>
<keyword id="KW-0964">Secreted</keyword>
<keyword id="KW-0862">Zinc</keyword>
<dbReference type="EMBL" id="U51340">
    <property type="protein sequence ID" value="AAB38571.1"/>
    <property type="molecule type" value="Genomic_DNA"/>
</dbReference>
<dbReference type="EMBL" id="U51359">
    <property type="protein sequence ID" value="AAB38589.1"/>
    <property type="molecule type" value="Genomic_DNA"/>
</dbReference>
<dbReference type="SMR" id="P79709"/>
<dbReference type="GO" id="GO:0005615">
    <property type="term" value="C:extracellular space"/>
    <property type="evidence" value="ECO:0007669"/>
    <property type="project" value="TreeGrafter"/>
</dbReference>
<dbReference type="GO" id="GO:0005886">
    <property type="term" value="C:plasma membrane"/>
    <property type="evidence" value="ECO:0007669"/>
    <property type="project" value="UniProtKB-SubCell"/>
</dbReference>
<dbReference type="GO" id="GO:0005509">
    <property type="term" value="F:calcium ion binding"/>
    <property type="evidence" value="ECO:0007669"/>
    <property type="project" value="TreeGrafter"/>
</dbReference>
<dbReference type="GO" id="GO:0005113">
    <property type="term" value="F:patched binding"/>
    <property type="evidence" value="ECO:0007669"/>
    <property type="project" value="TreeGrafter"/>
</dbReference>
<dbReference type="GO" id="GO:0008233">
    <property type="term" value="F:peptidase activity"/>
    <property type="evidence" value="ECO:0007669"/>
    <property type="project" value="UniProtKB-KW"/>
</dbReference>
<dbReference type="GO" id="GO:0048513">
    <property type="term" value="P:animal organ development"/>
    <property type="evidence" value="ECO:0007669"/>
    <property type="project" value="UniProtKB-ARBA"/>
</dbReference>
<dbReference type="GO" id="GO:0048468">
    <property type="term" value="P:cell development"/>
    <property type="evidence" value="ECO:0007669"/>
    <property type="project" value="UniProtKB-ARBA"/>
</dbReference>
<dbReference type="GO" id="GO:0001708">
    <property type="term" value="P:cell fate specification"/>
    <property type="evidence" value="ECO:0007669"/>
    <property type="project" value="TreeGrafter"/>
</dbReference>
<dbReference type="GO" id="GO:0007267">
    <property type="term" value="P:cell-cell signaling"/>
    <property type="evidence" value="ECO:0007669"/>
    <property type="project" value="InterPro"/>
</dbReference>
<dbReference type="GO" id="GO:0007417">
    <property type="term" value="P:central nervous system development"/>
    <property type="evidence" value="ECO:0007669"/>
    <property type="project" value="UniProtKB-ARBA"/>
</dbReference>
<dbReference type="GO" id="GO:0030182">
    <property type="term" value="P:neuron differentiation"/>
    <property type="evidence" value="ECO:0007669"/>
    <property type="project" value="UniProtKB-ARBA"/>
</dbReference>
<dbReference type="GO" id="GO:0006508">
    <property type="term" value="P:proteolysis"/>
    <property type="evidence" value="ECO:0007669"/>
    <property type="project" value="UniProtKB-KW"/>
</dbReference>
<dbReference type="GO" id="GO:0010468">
    <property type="term" value="P:regulation of gene expression"/>
    <property type="evidence" value="ECO:0007669"/>
    <property type="project" value="TreeGrafter"/>
</dbReference>
<dbReference type="GO" id="GO:0007224">
    <property type="term" value="P:smoothened signaling pathway"/>
    <property type="evidence" value="ECO:0007669"/>
    <property type="project" value="TreeGrafter"/>
</dbReference>
<dbReference type="GO" id="GO:0009888">
    <property type="term" value="P:tissue development"/>
    <property type="evidence" value="ECO:0007669"/>
    <property type="project" value="UniProtKB-ARBA"/>
</dbReference>
<dbReference type="Gene3D" id="3.30.1380.10">
    <property type="match status" value="1"/>
</dbReference>
<dbReference type="InterPro" id="IPR001657">
    <property type="entry name" value="Hedgehog"/>
</dbReference>
<dbReference type="InterPro" id="IPR009045">
    <property type="entry name" value="Hedgehog_sig/DD-Pept_Zn-bd_sf"/>
</dbReference>
<dbReference type="InterPro" id="IPR050387">
    <property type="entry name" value="Hedgehog_Signaling"/>
</dbReference>
<dbReference type="InterPro" id="IPR000320">
    <property type="entry name" value="Hedgehog_signalling_dom"/>
</dbReference>
<dbReference type="PANTHER" id="PTHR11889">
    <property type="entry name" value="HEDGEHOG"/>
    <property type="match status" value="1"/>
</dbReference>
<dbReference type="PANTHER" id="PTHR11889:SF36">
    <property type="entry name" value="SONIC HEDGEHOG PROTEIN"/>
    <property type="match status" value="1"/>
</dbReference>
<dbReference type="Pfam" id="PF01085">
    <property type="entry name" value="HH_signal"/>
    <property type="match status" value="1"/>
</dbReference>
<dbReference type="PRINTS" id="PR00632">
    <property type="entry name" value="SONICHHOG"/>
</dbReference>
<dbReference type="SUPFAM" id="SSF55166">
    <property type="entry name" value="Hedgehog/DD-peptidase"/>
    <property type="match status" value="1"/>
</dbReference>